<dbReference type="EMBL" id="CP000886">
    <property type="protein sequence ID" value="ABX65459.1"/>
    <property type="molecule type" value="Genomic_DNA"/>
</dbReference>
<dbReference type="RefSeq" id="WP_001119009.1">
    <property type="nucleotide sequence ID" value="NC_010102.1"/>
</dbReference>
<dbReference type="SMR" id="A9MXI3"/>
<dbReference type="KEGG" id="spq:SPAB_00015"/>
<dbReference type="PATRIC" id="fig|1016998.12.peg.14"/>
<dbReference type="HOGENOM" id="CLU_017633_0_7_6"/>
<dbReference type="BioCyc" id="SENT1016998:SPAB_RS00070-MONOMER"/>
<dbReference type="Proteomes" id="UP000008556">
    <property type="component" value="Chromosome"/>
</dbReference>
<dbReference type="GO" id="GO:0005737">
    <property type="term" value="C:cytoplasm"/>
    <property type="evidence" value="ECO:0007669"/>
    <property type="project" value="UniProtKB-SubCell"/>
</dbReference>
<dbReference type="GO" id="GO:0005524">
    <property type="term" value="F:ATP binding"/>
    <property type="evidence" value="ECO:0007669"/>
    <property type="project" value="InterPro"/>
</dbReference>
<dbReference type="GO" id="GO:0031072">
    <property type="term" value="F:heat shock protein binding"/>
    <property type="evidence" value="ECO:0007669"/>
    <property type="project" value="InterPro"/>
</dbReference>
<dbReference type="GO" id="GO:0051082">
    <property type="term" value="F:unfolded protein binding"/>
    <property type="evidence" value="ECO:0007669"/>
    <property type="project" value="UniProtKB-UniRule"/>
</dbReference>
<dbReference type="GO" id="GO:0008270">
    <property type="term" value="F:zinc ion binding"/>
    <property type="evidence" value="ECO:0007669"/>
    <property type="project" value="UniProtKB-UniRule"/>
</dbReference>
<dbReference type="GO" id="GO:0051085">
    <property type="term" value="P:chaperone cofactor-dependent protein refolding"/>
    <property type="evidence" value="ECO:0007669"/>
    <property type="project" value="TreeGrafter"/>
</dbReference>
<dbReference type="GO" id="GO:0006260">
    <property type="term" value="P:DNA replication"/>
    <property type="evidence" value="ECO:0007669"/>
    <property type="project" value="UniProtKB-KW"/>
</dbReference>
<dbReference type="GO" id="GO:0042026">
    <property type="term" value="P:protein refolding"/>
    <property type="evidence" value="ECO:0007669"/>
    <property type="project" value="TreeGrafter"/>
</dbReference>
<dbReference type="GO" id="GO:0009408">
    <property type="term" value="P:response to heat"/>
    <property type="evidence" value="ECO:0007669"/>
    <property type="project" value="InterPro"/>
</dbReference>
<dbReference type="CDD" id="cd06257">
    <property type="entry name" value="DnaJ"/>
    <property type="match status" value="1"/>
</dbReference>
<dbReference type="CDD" id="cd10747">
    <property type="entry name" value="DnaJ_C"/>
    <property type="match status" value="1"/>
</dbReference>
<dbReference type="CDD" id="cd10719">
    <property type="entry name" value="DnaJ_zf"/>
    <property type="match status" value="1"/>
</dbReference>
<dbReference type="FunFam" id="1.10.287.110:FF:000003">
    <property type="entry name" value="Molecular chaperone DnaJ"/>
    <property type="match status" value="1"/>
</dbReference>
<dbReference type="FunFam" id="2.10.230.10:FF:000002">
    <property type="entry name" value="Molecular chaperone DnaJ"/>
    <property type="match status" value="1"/>
</dbReference>
<dbReference type="FunFam" id="2.60.260.20:FF:000004">
    <property type="entry name" value="Molecular chaperone DnaJ"/>
    <property type="match status" value="1"/>
</dbReference>
<dbReference type="Gene3D" id="1.10.287.110">
    <property type="entry name" value="DnaJ domain"/>
    <property type="match status" value="1"/>
</dbReference>
<dbReference type="Gene3D" id="2.10.230.10">
    <property type="entry name" value="Heat shock protein DnaJ, cysteine-rich domain"/>
    <property type="match status" value="1"/>
</dbReference>
<dbReference type="Gene3D" id="2.60.260.20">
    <property type="entry name" value="Urease metallochaperone UreE, N-terminal domain"/>
    <property type="match status" value="2"/>
</dbReference>
<dbReference type="HAMAP" id="MF_01152">
    <property type="entry name" value="DnaJ"/>
    <property type="match status" value="1"/>
</dbReference>
<dbReference type="InterPro" id="IPR012724">
    <property type="entry name" value="DnaJ"/>
</dbReference>
<dbReference type="InterPro" id="IPR002939">
    <property type="entry name" value="DnaJ_C"/>
</dbReference>
<dbReference type="InterPro" id="IPR001623">
    <property type="entry name" value="DnaJ_domain"/>
</dbReference>
<dbReference type="InterPro" id="IPR018253">
    <property type="entry name" value="DnaJ_domain_CS"/>
</dbReference>
<dbReference type="InterPro" id="IPR008971">
    <property type="entry name" value="HSP40/DnaJ_pept-bd"/>
</dbReference>
<dbReference type="InterPro" id="IPR001305">
    <property type="entry name" value="HSP_DnaJ_Cys-rich_dom"/>
</dbReference>
<dbReference type="InterPro" id="IPR036410">
    <property type="entry name" value="HSP_DnaJ_Cys-rich_dom_sf"/>
</dbReference>
<dbReference type="InterPro" id="IPR036869">
    <property type="entry name" value="J_dom_sf"/>
</dbReference>
<dbReference type="NCBIfam" id="TIGR02349">
    <property type="entry name" value="DnaJ_bact"/>
    <property type="match status" value="1"/>
</dbReference>
<dbReference type="NCBIfam" id="NF008035">
    <property type="entry name" value="PRK10767.1"/>
    <property type="match status" value="1"/>
</dbReference>
<dbReference type="PANTHER" id="PTHR43096:SF48">
    <property type="entry name" value="CHAPERONE PROTEIN DNAJ"/>
    <property type="match status" value="1"/>
</dbReference>
<dbReference type="PANTHER" id="PTHR43096">
    <property type="entry name" value="DNAJ HOMOLOG 1, MITOCHONDRIAL-RELATED"/>
    <property type="match status" value="1"/>
</dbReference>
<dbReference type="Pfam" id="PF00226">
    <property type="entry name" value="DnaJ"/>
    <property type="match status" value="1"/>
</dbReference>
<dbReference type="Pfam" id="PF01556">
    <property type="entry name" value="DnaJ_C"/>
    <property type="match status" value="1"/>
</dbReference>
<dbReference type="Pfam" id="PF00684">
    <property type="entry name" value="DnaJ_CXXCXGXG"/>
    <property type="match status" value="1"/>
</dbReference>
<dbReference type="PRINTS" id="PR00625">
    <property type="entry name" value="JDOMAIN"/>
</dbReference>
<dbReference type="SMART" id="SM00271">
    <property type="entry name" value="DnaJ"/>
    <property type="match status" value="1"/>
</dbReference>
<dbReference type="SUPFAM" id="SSF46565">
    <property type="entry name" value="Chaperone J-domain"/>
    <property type="match status" value="1"/>
</dbReference>
<dbReference type="SUPFAM" id="SSF57938">
    <property type="entry name" value="DnaJ/Hsp40 cysteine-rich domain"/>
    <property type="match status" value="1"/>
</dbReference>
<dbReference type="SUPFAM" id="SSF49493">
    <property type="entry name" value="HSP40/DnaJ peptide-binding domain"/>
    <property type="match status" value="2"/>
</dbReference>
<dbReference type="PROSITE" id="PS00636">
    <property type="entry name" value="DNAJ_1"/>
    <property type="match status" value="1"/>
</dbReference>
<dbReference type="PROSITE" id="PS50076">
    <property type="entry name" value="DNAJ_2"/>
    <property type="match status" value="1"/>
</dbReference>
<dbReference type="PROSITE" id="PS51188">
    <property type="entry name" value="ZF_CR"/>
    <property type="match status" value="1"/>
</dbReference>
<feature type="chain" id="PRO_1000085283" description="Chaperone protein DnaJ">
    <location>
        <begin position="1"/>
        <end position="379"/>
    </location>
</feature>
<feature type="domain" description="J" evidence="1">
    <location>
        <begin position="5"/>
        <end position="70"/>
    </location>
</feature>
<feature type="repeat" description="CXXCXGXG motif">
    <location>
        <begin position="147"/>
        <end position="154"/>
    </location>
</feature>
<feature type="repeat" description="CXXCXGXG motif">
    <location>
        <begin position="164"/>
        <end position="171"/>
    </location>
</feature>
<feature type="repeat" description="CXXCXGXG motif">
    <location>
        <begin position="186"/>
        <end position="193"/>
    </location>
</feature>
<feature type="repeat" description="CXXCXGXG motif">
    <location>
        <begin position="200"/>
        <end position="207"/>
    </location>
</feature>
<feature type="zinc finger region" description="CR-type" evidence="1">
    <location>
        <begin position="134"/>
        <end position="212"/>
    </location>
</feature>
<feature type="binding site" evidence="1">
    <location>
        <position position="147"/>
    </location>
    <ligand>
        <name>Zn(2+)</name>
        <dbReference type="ChEBI" id="CHEBI:29105"/>
        <label>1</label>
    </ligand>
</feature>
<feature type="binding site" evidence="1">
    <location>
        <position position="150"/>
    </location>
    <ligand>
        <name>Zn(2+)</name>
        <dbReference type="ChEBI" id="CHEBI:29105"/>
        <label>1</label>
    </ligand>
</feature>
<feature type="binding site" evidence="1">
    <location>
        <position position="164"/>
    </location>
    <ligand>
        <name>Zn(2+)</name>
        <dbReference type="ChEBI" id="CHEBI:29105"/>
        <label>2</label>
    </ligand>
</feature>
<feature type="binding site" evidence="1">
    <location>
        <position position="167"/>
    </location>
    <ligand>
        <name>Zn(2+)</name>
        <dbReference type="ChEBI" id="CHEBI:29105"/>
        <label>2</label>
    </ligand>
</feature>
<feature type="binding site" evidence="1">
    <location>
        <position position="186"/>
    </location>
    <ligand>
        <name>Zn(2+)</name>
        <dbReference type="ChEBI" id="CHEBI:29105"/>
        <label>2</label>
    </ligand>
</feature>
<feature type="binding site" evidence="1">
    <location>
        <position position="189"/>
    </location>
    <ligand>
        <name>Zn(2+)</name>
        <dbReference type="ChEBI" id="CHEBI:29105"/>
        <label>2</label>
    </ligand>
</feature>
<feature type="binding site" evidence="1">
    <location>
        <position position="200"/>
    </location>
    <ligand>
        <name>Zn(2+)</name>
        <dbReference type="ChEBI" id="CHEBI:29105"/>
        <label>1</label>
    </ligand>
</feature>
<feature type="binding site" evidence="1">
    <location>
        <position position="203"/>
    </location>
    <ligand>
        <name>Zn(2+)</name>
        <dbReference type="ChEBI" id="CHEBI:29105"/>
        <label>1</label>
    </ligand>
</feature>
<keyword id="KW-0143">Chaperone</keyword>
<keyword id="KW-0963">Cytoplasm</keyword>
<keyword id="KW-0235">DNA replication</keyword>
<keyword id="KW-0479">Metal-binding</keyword>
<keyword id="KW-0677">Repeat</keyword>
<keyword id="KW-0346">Stress response</keyword>
<keyword id="KW-0862">Zinc</keyword>
<keyword id="KW-0863">Zinc-finger</keyword>
<sequence length="379" mass="41313">MAKRDYYEILGVSKTAEEREIKKAYKRLAMKYHPDRNQGDKEAEAKFKEIKEAYEVLTDAQKRAAYDQYGHAAFEQGGMGGGFGGGFNGGADFSDIFGDVFGDIFGGGRGRQRAARGADLRYNMDLTLEEAVRGVTKEIRIPTLEECDVCHGSGAKAGTQPQTCPTCHGSGQVQMRQGFFAVQQTCPHCQGRGTLIKDPCHKCHGHGRVEKSKTLSVKIPAGVDTGDRIRLAGEGEAGEHGAPAGDLYVQVQVKQHPIFEREGNNLYCEVPINFAMAALGGEIEVPTLDGRVMLKVPSETQTGKLFRMRGKGVKSVRGGAQGDLLCRVVVETPVGLSEKQKQLLKDLQESFGGPTGEKNSPRSKSFFDGVKKFFDDLTR</sequence>
<gene>
    <name evidence="1" type="primary">dnaJ</name>
    <name type="ordered locus">SPAB_00015</name>
</gene>
<evidence type="ECO:0000255" key="1">
    <source>
        <dbReference type="HAMAP-Rule" id="MF_01152"/>
    </source>
</evidence>
<name>DNAJ_SALPB</name>
<accession>A9MXI3</accession>
<comment type="function">
    <text evidence="1">Participates actively in the response to hyperosmotic and heat shock by preventing the aggregation of stress-denatured proteins and by disaggregating proteins, also in an autonomous, DnaK-independent fashion. Unfolded proteins bind initially to DnaJ; upon interaction with the DnaJ-bound protein, DnaK hydrolyzes its bound ATP, resulting in the formation of a stable complex. GrpE releases ADP from DnaK; ATP binding to DnaK triggers the release of the substrate protein, thus completing the reaction cycle. Several rounds of ATP-dependent interactions between DnaJ, DnaK and GrpE are required for fully efficient folding. Also involved, together with DnaK and GrpE, in the DNA replication of plasmids through activation of initiation proteins.</text>
</comment>
<comment type="cofactor">
    <cofactor evidence="1">
        <name>Zn(2+)</name>
        <dbReference type="ChEBI" id="CHEBI:29105"/>
    </cofactor>
    <text evidence="1">Binds 2 Zn(2+) ions per monomer.</text>
</comment>
<comment type="subunit">
    <text evidence="1">Homodimer.</text>
</comment>
<comment type="subcellular location">
    <subcellularLocation>
        <location evidence="1">Cytoplasm</location>
    </subcellularLocation>
</comment>
<comment type="domain">
    <text evidence="1">The J domain is necessary and sufficient to stimulate DnaK ATPase activity. Zinc center 1 plays an important role in the autonomous, DnaK-independent chaperone activity of DnaJ. Zinc center 2 is essential for interaction with DnaK and for DnaJ activity.</text>
</comment>
<comment type="similarity">
    <text evidence="1">Belongs to the DnaJ family.</text>
</comment>
<organism>
    <name type="scientific">Salmonella paratyphi B (strain ATCC BAA-1250 / SPB7)</name>
    <dbReference type="NCBI Taxonomy" id="1016998"/>
    <lineage>
        <taxon>Bacteria</taxon>
        <taxon>Pseudomonadati</taxon>
        <taxon>Pseudomonadota</taxon>
        <taxon>Gammaproteobacteria</taxon>
        <taxon>Enterobacterales</taxon>
        <taxon>Enterobacteriaceae</taxon>
        <taxon>Salmonella</taxon>
    </lineage>
</organism>
<proteinExistence type="inferred from homology"/>
<reference key="1">
    <citation type="submission" date="2007-11" db="EMBL/GenBank/DDBJ databases">
        <authorList>
            <consortium name="The Salmonella enterica serovar Paratyphi B Genome Sequencing Project"/>
            <person name="McClelland M."/>
            <person name="Sanderson E.K."/>
            <person name="Porwollik S."/>
            <person name="Spieth J."/>
            <person name="Clifton W.S."/>
            <person name="Fulton R."/>
            <person name="Cordes M."/>
            <person name="Wollam A."/>
            <person name="Shah N."/>
            <person name="Pepin K."/>
            <person name="Bhonagiri V."/>
            <person name="Nash W."/>
            <person name="Johnson M."/>
            <person name="Thiruvilangam P."/>
            <person name="Wilson R."/>
        </authorList>
    </citation>
    <scope>NUCLEOTIDE SEQUENCE [LARGE SCALE GENOMIC DNA]</scope>
    <source>
        <strain>ATCC BAA-1250 / SPB7</strain>
    </source>
</reference>
<protein>
    <recommendedName>
        <fullName evidence="1">Chaperone protein DnaJ</fullName>
    </recommendedName>
</protein>